<name>ISCS_DICTD</name>
<dbReference type="EC" id="2.8.1.7" evidence="1"/>
<dbReference type="EMBL" id="CP001251">
    <property type="protein sequence ID" value="ACK42004.1"/>
    <property type="molecule type" value="Genomic_DNA"/>
</dbReference>
<dbReference type="RefSeq" id="YP_002352618.1">
    <property type="nucleotide sequence ID" value="NC_011661.1"/>
</dbReference>
<dbReference type="SMR" id="B8DZS1"/>
<dbReference type="FunCoup" id="B8DZS1">
    <property type="interactions" value="335"/>
</dbReference>
<dbReference type="STRING" id="515635.Dtur_0719"/>
<dbReference type="EnsemblBacteria" id="ACK42004">
    <property type="protein sequence ID" value="ACK42004"/>
    <property type="gene ID" value="Dtur_0719"/>
</dbReference>
<dbReference type="KEGG" id="dtu:Dtur_0719"/>
<dbReference type="PATRIC" id="fig|515635.4.peg.756"/>
<dbReference type="eggNOG" id="COG1104">
    <property type="taxonomic scope" value="Bacteria"/>
</dbReference>
<dbReference type="HOGENOM" id="CLU_003433_0_0_0"/>
<dbReference type="InParanoid" id="B8DZS1"/>
<dbReference type="OrthoDB" id="9808002at2"/>
<dbReference type="UniPathway" id="UPA00266"/>
<dbReference type="Proteomes" id="UP000007719">
    <property type="component" value="Chromosome"/>
</dbReference>
<dbReference type="GO" id="GO:1990221">
    <property type="term" value="C:L-cysteine desulfurase complex"/>
    <property type="evidence" value="ECO:0007669"/>
    <property type="project" value="UniProtKB-ARBA"/>
</dbReference>
<dbReference type="GO" id="GO:0051537">
    <property type="term" value="F:2 iron, 2 sulfur cluster binding"/>
    <property type="evidence" value="ECO:0007669"/>
    <property type="project" value="UniProtKB-UniRule"/>
</dbReference>
<dbReference type="GO" id="GO:0031071">
    <property type="term" value="F:cysteine desulfurase activity"/>
    <property type="evidence" value="ECO:0007669"/>
    <property type="project" value="UniProtKB-UniRule"/>
</dbReference>
<dbReference type="GO" id="GO:0046872">
    <property type="term" value="F:metal ion binding"/>
    <property type="evidence" value="ECO:0007669"/>
    <property type="project" value="UniProtKB-KW"/>
</dbReference>
<dbReference type="GO" id="GO:0030170">
    <property type="term" value="F:pyridoxal phosphate binding"/>
    <property type="evidence" value="ECO:0007669"/>
    <property type="project" value="UniProtKB-UniRule"/>
</dbReference>
<dbReference type="GO" id="GO:0044571">
    <property type="term" value="P:[2Fe-2S] cluster assembly"/>
    <property type="evidence" value="ECO:0007669"/>
    <property type="project" value="UniProtKB-UniRule"/>
</dbReference>
<dbReference type="GO" id="GO:0006520">
    <property type="term" value="P:amino acid metabolic process"/>
    <property type="evidence" value="ECO:0007669"/>
    <property type="project" value="InterPro"/>
</dbReference>
<dbReference type="FunFam" id="3.40.640.10:FF:000003">
    <property type="entry name" value="Cysteine desulfurase IscS"/>
    <property type="match status" value="1"/>
</dbReference>
<dbReference type="Gene3D" id="1.10.260.50">
    <property type="match status" value="1"/>
</dbReference>
<dbReference type="Gene3D" id="3.90.1150.10">
    <property type="entry name" value="Aspartate Aminotransferase, domain 1"/>
    <property type="match status" value="1"/>
</dbReference>
<dbReference type="Gene3D" id="3.40.640.10">
    <property type="entry name" value="Type I PLP-dependent aspartate aminotransferase-like (Major domain)"/>
    <property type="match status" value="1"/>
</dbReference>
<dbReference type="HAMAP" id="MF_00331">
    <property type="entry name" value="Cys_desulf_IscS"/>
    <property type="match status" value="1"/>
</dbReference>
<dbReference type="InterPro" id="IPR000192">
    <property type="entry name" value="Aminotrans_V_dom"/>
</dbReference>
<dbReference type="InterPro" id="IPR020578">
    <property type="entry name" value="Aminotrans_V_PyrdxlP_BS"/>
</dbReference>
<dbReference type="InterPro" id="IPR010240">
    <property type="entry name" value="Cys_deSase_IscS"/>
</dbReference>
<dbReference type="InterPro" id="IPR017772">
    <property type="entry name" value="Cys_deSase_NifS_bac/arc"/>
</dbReference>
<dbReference type="InterPro" id="IPR016454">
    <property type="entry name" value="Cysteine_dSase"/>
</dbReference>
<dbReference type="InterPro" id="IPR015424">
    <property type="entry name" value="PyrdxlP-dep_Trfase"/>
</dbReference>
<dbReference type="InterPro" id="IPR015421">
    <property type="entry name" value="PyrdxlP-dep_Trfase_major"/>
</dbReference>
<dbReference type="InterPro" id="IPR015422">
    <property type="entry name" value="PyrdxlP-dep_Trfase_small"/>
</dbReference>
<dbReference type="NCBIfam" id="TIGR03402">
    <property type="entry name" value="FeS_nifS"/>
    <property type="match status" value="1"/>
</dbReference>
<dbReference type="NCBIfam" id="NF002806">
    <property type="entry name" value="PRK02948.1"/>
    <property type="match status" value="1"/>
</dbReference>
<dbReference type="PANTHER" id="PTHR11601:SF34">
    <property type="entry name" value="CYSTEINE DESULFURASE"/>
    <property type="match status" value="1"/>
</dbReference>
<dbReference type="PANTHER" id="PTHR11601">
    <property type="entry name" value="CYSTEINE DESULFURYLASE FAMILY MEMBER"/>
    <property type="match status" value="1"/>
</dbReference>
<dbReference type="Pfam" id="PF00266">
    <property type="entry name" value="Aminotran_5"/>
    <property type="match status" value="1"/>
</dbReference>
<dbReference type="PIRSF" id="PIRSF005572">
    <property type="entry name" value="NifS"/>
    <property type="match status" value="1"/>
</dbReference>
<dbReference type="SUPFAM" id="SSF53383">
    <property type="entry name" value="PLP-dependent transferases"/>
    <property type="match status" value="1"/>
</dbReference>
<dbReference type="PROSITE" id="PS00595">
    <property type="entry name" value="AA_TRANSFER_CLASS_5"/>
    <property type="match status" value="1"/>
</dbReference>
<comment type="function">
    <text evidence="1">Master enzyme that delivers sulfur to a number of partners involved in Fe-S cluster assembly, tRNA modification or cofactor biosynthesis. Catalyzes the removal of elemental sulfur atoms from cysteine to produce alanine. Functions as a sulfur delivery protein for Fe-S cluster synthesis onto IscU, an Fe-S scaffold assembly protein, as well as other S acceptor proteins.</text>
</comment>
<comment type="catalytic activity">
    <reaction evidence="1">
        <text>(sulfur carrier)-H + L-cysteine = (sulfur carrier)-SH + L-alanine</text>
        <dbReference type="Rhea" id="RHEA:43892"/>
        <dbReference type="Rhea" id="RHEA-COMP:14737"/>
        <dbReference type="Rhea" id="RHEA-COMP:14739"/>
        <dbReference type="ChEBI" id="CHEBI:29917"/>
        <dbReference type="ChEBI" id="CHEBI:35235"/>
        <dbReference type="ChEBI" id="CHEBI:57972"/>
        <dbReference type="ChEBI" id="CHEBI:64428"/>
        <dbReference type="EC" id="2.8.1.7"/>
    </reaction>
</comment>
<comment type="cofactor">
    <cofactor evidence="1">
        <name>pyridoxal 5'-phosphate</name>
        <dbReference type="ChEBI" id="CHEBI:597326"/>
    </cofactor>
</comment>
<comment type="pathway">
    <text evidence="1">Cofactor biosynthesis; iron-sulfur cluster biosynthesis.</text>
</comment>
<comment type="subunit">
    <text evidence="1">Homodimer. Forms a heterotetramer with IscU, interacts with other sulfur acceptors.</text>
</comment>
<comment type="subcellular location">
    <subcellularLocation>
        <location evidence="1">Cytoplasm</location>
    </subcellularLocation>
</comment>
<comment type="similarity">
    <text evidence="1">Belongs to the class-V pyridoxal-phosphate-dependent aminotransferase family. NifS/IscS subfamily.</text>
</comment>
<reference key="1">
    <citation type="journal article" date="2016" name="Front. Microbiol.">
        <title>The complete genome sequence of hyperthermophile Dictyoglomus turgidum DSM 6724 reveals a specialized carbohydrate fermentor.</title>
        <authorList>
            <person name="Brumm P.J."/>
            <person name="Gowda K."/>
            <person name="Robb F.T."/>
            <person name="Mead D.A."/>
        </authorList>
    </citation>
    <scope>NUCLEOTIDE SEQUENCE [LARGE SCALE GENOMIC DNA]</scope>
    <source>
        <strain>DSM 6724 / Z-1310</strain>
    </source>
</reference>
<gene>
    <name evidence="1" type="primary">iscS</name>
    <name type="ordered locus">Dtur_0719</name>
</gene>
<accession>B8DZS1</accession>
<keyword id="KW-0001">2Fe-2S</keyword>
<keyword id="KW-0963">Cytoplasm</keyword>
<keyword id="KW-0408">Iron</keyword>
<keyword id="KW-0411">Iron-sulfur</keyword>
<keyword id="KW-0479">Metal-binding</keyword>
<keyword id="KW-0663">Pyridoxal phosphate</keyword>
<keyword id="KW-1185">Reference proteome</keyword>
<keyword id="KW-0808">Transferase</keyword>
<sequence>MKREVYLDYAATTPLRKEVYEAMKPFLKEKFGNPSSIHHFGRETRTAIEEAREKIAKAIGAKSDEIIFTSGGTESNNMAIKGVAFALSTKGKHIITSKVEHHAVLEPCHFLEKLGFEITYLPVDREGFVDPDDLKKALRKDTILISIMHANNEIGTIEPIQELSKIAKEYDIYFHTDAVQTVGHIPVNVDELGVDLLSISAHKFYGPKGVGALYIRKGTKIHPLIHGGSQENNKRAGTENVAGIIGMGKAIELAILEMDKEIERLTELRDYFIREVEKRISDVYLNGPRSNRLPNNINFSFAYVEGESILLHLDLEGVEVSTGSACSSSSLEPSHVLSAINVPIELAHGSIRFTLGLYTTKEDLNYTLDVLERIIEKLRTISPYKQEWKINKKS</sequence>
<protein>
    <recommendedName>
        <fullName evidence="1">Cysteine desulfurase IscS</fullName>
        <ecNumber evidence="1">2.8.1.7</ecNumber>
    </recommendedName>
</protein>
<proteinExistence type="inferred from homology"/>
<feature type="chain" id="PRO_1000119620" description="Cysteine desulfurase IscS">
    <location>
        <begin position="1"/>
        <end position="394"/>
    </location>
</feature>
<feature type="active site" description="Cysteine persulfide intermediate" evidence="1">
    <location>
        <position position="326"/>
    </location>
</feature>
<feature type="binding site" evidence="1">
    <location>
        <begin position="72"/>
        <end position="73"/>
    </location>
    <ligand>
        <name>pyridoxal 5'-phosphate</name>
        <dbReference type="ChEBI" id="CHEBI:597326"/>
    </ligand>
</feature>
<feature type="binding site" evidence="1">
    <location>
        <position position="152"/>
    </location>
    <ligand>
        <name>pyridoxal 5'-phosphate</name>
        <dbReference type="ChEBI" id="CHEBI:597326"/>
    </ligand>
</feature>
<feature type="binding site" evidence="1">
    <location>
        <position position="180"/>
    </location>
    <ligand>
        <name>pyridoxal 5'-phosphate</name>
        <dbReference type="ChEBI" id="CHEBI:597326"/>
    </ligand>
</feature>
<feature type="binding site" evidence="1">
    <location>
        <begin position="200"/>
        <end position="202"/>
    </location>
    <ligand>
        <name>pyridoxal 5'-phosphate</name>
        <dbReference type="ChEBI" id="CHEBI:597326"/>
    </ligand>
</feature>
<feature type="binding site" evidence="1">
    <location>
        <position position="238"/>
    </location>
    <ligand>
        <name>pyridoxal 5'-phosphate</name>
        <dbReference type="ChEBI" id="CHEBI:597326"/>
    </ligand>
</feature>
<feature type="binding site" description="via persulfide group" evidence="1">
    <location>
        <position position="326"/>
    </location>
    <ligand>
        <name>[2Fe-2S] cluster</name>
        <dbReference type="ChEBI" id="CHEBI:190135"/>
        <note>ligand shared with IscU</note>
    </ligand>
</feature>
<feature type="modified residue" description="N6-(pyridoxal phosphate)lysine" evidence="1">
    <location>
        <position position="203"/>
    </location>
</feature>
<organism>
    <name type="scientific">Dictyoglomus turgidum (strain DSM 6724 / Z-1310)</name>
    <dbReference type="NCBI Taxonomy" id="515635"/>
    <lineage>
        <taxon>Bacteria</taxon>
        <taxon>Pseudomonadati</taxon>
        <taxon>Dictyoglomota</taxon>
        <taxon>Dictyoglomia</taxon>
        <taxon>Dictyoglomales</taxon>
        <taxon>Dictyoglomaceae</taxon>
        <taxon>Dictyoglomus</taxon>
    </lineage>
</organism>
<evidence type="ECO:0000255" key="1">
    <source>
        <dbReference type="HAMAP-Rule" id="MF_00331"/>
    </source>
</evidence>